<protein>
    <recommendedName>
        <fullName evidence="1">tRNA-2-methylthio-N(6)-dimethylallyladenosine synthase</fullName>
        <ecNumber evidence="1">2.8.4.3</ecNumber>
    </recommendedName>
    <alternativeName>
        <fullName evidence="1">(Dimethylallyl)adenosine tRNA methylthiotransferase MiaB</fullName>
    </alternativeName>
    <alternativeName>
        <fullName evidence="1">tRNA-i(6)A37 methylthiotransferase</fullName>
    </alternativeName>
</protein>
<reference key="1">
    <citation type="submission" date="2007-08" db="EMBL/GenBank/DDBJ databases">
        <title>Complete sequence of Thermotoga lettingae TMO.</title>
        <authorList>
            <consortium name="US DOE Joint Genome Institute"/>
            <person name="Copeland A."/>
            <person name="Lucas S."/>
            <person name="Lapidus A."/>
            <person name="Barry K."/>
            <person name="Glavina del Rio T."/>
            <person name="Dalin E."/>
            <person name="Tice H."/>
            <person name="Pitluck S."/>
            <person name="Foster B."/>
            <person name="Bruce D."/>
            <person name="Schmutz J."/>
            <person name="Larimer F."/>
            <person name="Land M."/>
            <person name="Hauser L."/>
            <person name="Kyrpides N."/>
            <person name="Mikhailova N."/>
            <person name="Nelson K."/>
            <person name="Gogarten J.P."/>
            <person name="Noll K."/>
            <person name="Richardson P."/>
        </authorList>
    </citation>
    <scope>NUCLEOTIDE SEQUENCE [LARGE SCALE GENOMIC DNA]</scope>
    <source>
        <strain>ATCC BAA-301 / DSM 14385 / NBRC 107922 / TMO</strain>
    </source>
</reference>
<name>MIAB_PSELT</name>
<comment type="function">
    <text evidence="1">Catalyzes the methylthiolation of N6-(dimethylallyl)adenosine (i(6)A), leading to the formation of 2-methylthio-N6-(dimethylallyl)adenosine (ms(2)i(6)A) at position 37 in tRNAs that read codons beginning with uridine.</text>
</comment>
<comment type="catalytic activity">
    <reaction evidence="1">
        <text>N(6)-dimethylallyladenosine(37) in tRNA + (sulfur carrier)-SH + AH2 + 2 S-adenosyl-L-methionine = 2-methylsulfanyl-N(6)-dimethylallyladenosine(37) in tRNA + (sulfur carrier)-H + 5'-deoxyadenosine + L-methionine + A + S-adenosyl-L-homocysteine + 2 H(+)</text>
        <dbReference type="Rhea" id="RHEA:37067"/>
        <dbReference type="Rhea" id="RHEA-COMP:10375"/>
        <dbReference type="Rhea" id="RHEA-COMP:10376"/>
        <dbReference type="Rhea" id="RHEA-COMP:14737"/>
        <dbReference type="Rhea" id="RHEA-COMP:14739"/>
        <dbReference type="ChEBI" id="CHEBI:13193"/>
        <dbReference type="ChEBI" id="CHEBI:15378"/>
        <dbReference type="ChEBI" id="CHEBI:17319"/>
        <dbReference type="ChEBI" id="CHEBI:17499"/>
        <dbReference type="ChEBI" id="CHEBI:29917"/>
        <dbReference type="ChEBI" id="CHEBI:57844"/>
        <dbReference type="ChEBI" id="CHEBI:57856"/>
        <dbReference type="ChEBI" id="CHEBI:59789"/>
        <dbReference type="ChEBI" id="CHEBI:64428"/>
        <dbReference type="ChEBI" id="CHEBI:74415"/>
        <dbReference type="ChEBI" id="CHEBI:74417"/>
        <dbReference type="EC" id="2.8.4.3"/>
    </reaction>
</comment>
<comment type="cofactor">
    <cofactor evidence="1">
        <name>[4Fe-4S] cluster</name>
        <dbReference type="ChEBI" id="CHEBI:49883"/>
    </cofactor>
    <text evidence="1">Binds 2 [4Fe-4S] clusters. One cluster is coordinated with 3 cysteines and an exchangeable S-adenosyl-L-methionine.</text>
</comment>
<comment type="subunit">
    <text evidence="1">Monomer.</text>
</comment>
<comment type="subcellular location">
    <subcellularLocation>
        <location evidence="1">Cytoplasm</location>
    </subcellularLocation>
</comment>
<comment type="similarity">
    <text evidence="1">Belongs to the methylthiotransferase family. MiaB subfamily.</text>
</comment>
<gene>
    <name evidence="1" type="primary">miaB</name>
    <name type="ordered locus">Tlet_1393</name>
</gene>
<keyword id="KW-0004">4Fe-4S</keyword>
<keyword id="KW-0963">Cytoplasm</keyword>
<keyword id="KW-0408">Iron</keyword>
<keyword id="KW-0411">Iron-sulfur</keyword>
<keyword id="KW-0479">Metal-binding</keyword>
<keyword id="KW-1185">Reference proteome</keyword>
<keyword id="KW-0949">S-adenosyl-L-methionine</keyword>
<keyword id="KW-0808">Transferase</keyword>
<keyword id="KW-0819">tRNA processing</keyword>
<proteinExistence type="inferred from homology"/>
<sequence length="436" mass="49556">MRVFFKTYGCQMNLNDTETMAGILSQHGYEVVNLPEEADIVILNTCVVRQKSQEKYHSALGQFVKLKKSGKIKLIGIAGCGSNLEGEELIKSGADFVIGSRSIGKIAEVLQKAARGEKIVYLEDDICTVDSKTPRMRFSKHHAWITIIHGCNRFCTYCIVPYTRGREKSRPLPDVLLEVEKLAKNGVKEITFLGQNVDAYGKDLKDGTNLASLIEQAGKFEQIKRIWFLTSYPTDITDKLIETVAEDPKAAKSFHIPVQSGSNRILRLMNRRYDRDQFLQLVEKIRSKIPHASISSDIIVGFPTETEYDYMQTMDLVRKARFERLNLAVYSPRQGTVASKYFKDDVPREEKVQRLNKLLELQKQINRELNMQYLGKVVEIIVEGKTKEGLYYGRDIRNKVIIFSSQEVSEGENVLLKIDKITAGPLYGKLQKKCGL</sequence>
<dbReference type="EC" id="2.8.4.3" evidence="1"/>
<dbReference type="EMBL" id="CP000812">
    <property type="protein sequence ID" value="ABV33950.1"/>
    <property type="molecule type" value="Genomic_DNA"/>
</dbReference>
<dbReference type="RefSeq" id="WP_012003426.1">
    <property type="nucleotide sequence ID" value="NZ_BSDV01000001.1"/>
</dbReference>
<dbReference type="SMR" id="A8F716"/>
<dbReference type="STRING" id="416591.Tlet_1393"/>
<dbReference type="KEGG" id="tle:Tlet_1393"/>
<dbReference type="eggNOG" id="COG0621">
    <property type="taxonomic scope" value="Bacteria"/>
</dbReference>
<dbReference type="HOGENOM" id="CLU_018697_2_0_0"/>
<dbReference type="OrthoDB" id="9805215at2"/>
<dbReference type="Proteomes" id="UP000002016">
    <property type="component" value="Chromosome"/>
</dbReference>
<dbReference type="GO" id="GO:0005829">
    <property type="term" value="C:cytosol"/>
    <property type="evidence" value="ECO:0007669"/>
    <property type="project" value="TreeGrafter"/>
</dbReference>
<dbReference type="GO" id="GO:0051539">
    <property type="term" value="F:4 iron, 4 sulfur cluster binding"/>
    <property type="evidence" value="ECO:0007669"/>
    <property type="project" value="UniProtKB-UniRule"/>
</dbReference>
<dbReference type="GO" id="GO:0046872">
    <property type="term" value="F:metal ion binding"/>
    <property type="evidence" value="ECO:0007669"/>
    <property type="project" value="UniProtKB-KW"/>
</dbReference>
<dbReference type="GO" id="GO:0035597">
    <property type="term" value="F:N6-isopentenyladenosine methylthiotransferase activity"/>
    <property type="evidence" value="ECO:0007669"/>
    <property type="project" value="TreeGrafter"/>
</dbReference>
<dbReference type="CDD" id="cd01335">
    <property type="entry name" value="Radical_SAM"/>
    <property type="match status" value="1"/>
</dbReference>
<dbReference type="FunFam" id="3.40.50.12160:FF:000003">
    <property type="entry name" value="CDK5 regulatory subunit-associated protein 1"/>
    <property type="match status" value="1"/>
</dbReference>
<dbReference type="FunFam" id="3.80.30.20:FF:000001">
    <property type="entry name" value="tRNA-2-methylthio-N(6)-dimethylallyladenosine synthase 2"/>
    <property type="match status" value="1"/>
</dbReference>
<dbReference type="Gene3D" id="3.40.50.12160">
    <property type="entry name" value="Methylthiotransferase, N-terminal domain"/>
    <property type="match status" value="1"/>
</dbReference>
<dbReference type="Gene3D" id="3.80.30.20">
    <property type="entry name" value="tm_1862 like domain"/>
    <property type="match status" value="1"/>
</dbReference>
<dbReference type="HAMAP" id="MF_01864">
    <property type="entry name" value="tRNA_metthiotr_MiaB"/>
    <property type="match status" value="1"/>
</dbReference>
<dbReference type="InterPro" id="IPR006638">
    <property type="entry name" value="Elp3/MiaA/NifB-like_rSAM"/>
</dbReference>
<dbReference type="InterPro" id="IPR005839">
    <property type="entry name" value="Methylthiotransferase"/>
</dbReference>
<dbReference type="InterPro" id="IPR020612">
    <property type="entry name" value="Methylthiotransferase_CS"/>
</dbReference>
<dbReference type="InterPro" id="IPR013848">
    <property type="entry name" value="Methylthiotransferase_N"/>
</dbReference>
<dbReference type="InterPro" id="IPR038135">
    <property type="entry name" value="Methylthiotransferase_N_sf"/>
</dbReference>
<dbReference type="InterPro" id="IPR006463">
    <property type="entry name" value="MiaB_methiolase"/>
</dbReference>
<dbReference type="InterPro" id="IPR007197">
    <property type="entry name" value="rSAM"/>
</dbReference>
<dbReference type="InterPro" id="IPR023404">
    <property type="entry name" value="rSAM_horseshoe"/>
</dbReference>
<dbReference type="InterPro" id="IPR002792">
    <property type="entry name" value="TRAM_dom"/>
</dbReference>
<dbReference type="NCBIfam" id="TIGR01574">
    <property type="entry name" value="miaB-methiolase"/>
    <property type="match status" value="1"/>
</dbReference>
<dbReference type="NCBIfam" id="TIGR00089">
    <property type="entry name" value="MiaB/RimO family radical SAM methylthiotransferase"/>
    <property type="match status" value="1"/>
</dbReference>
<dbReference type="PANTHER" id="PTHR43020">
    <property type="entry name" value="CDK5 REGULATORY SUBUNIT-ASSOCIATED PROTEIN 1"/>
    <property type="match status" value="1"/>
</dbReference>
<dbReference type="PANTHER" id="PTHR43020:SF2">
    <property type="entry name" value="MITOCHONDRIAL TRNA METHYLTHIOTRANSFERASE CDK5RAP1"/>
    <property type="match status" value="1"/>
</dbReference>
<dbReference type="Pfam" id="PF04055">
    <property type="entry name" value="Radical_SAM"/>
    <property type="match status" value="1"/>
</dbReference>
<dbReference type="Pfam" id="PF01938">
    <property type="entry name" value="TRAM"/>
    <property type="match status" value="1"/>
</dbReference>
<dbReference type="Pfam" id="PF00919">
    <property type="entry name" value="UPF0004"/>
    <property type="match status" value="1"/>
</dbReference>
<dbReference type="SFLD" id="SFLDF00273">
    <property type="entry name" value="(dimethylallyl)adenosine_tRNA"/>
    <property type="match status" value="1"/>
</dbReference>
<dbReference type="SFLD" id="SFLDG01082">
    <property type="entry name" value="B12-binding_domain_containing"/>
    <property type="match status" value="1"/>
</dbReference>
<dbReference type="SFLD" id="SFLDG01061">
    <property type="entry name" value="methylthiotransferase"/>
    <property type="match status" value="1"/>
</dbReference>
<dbReference type="SMART" id="SM00729">
    <property type="entry name" value="Elp3"/>
    <property type="match status" value="1"/>
</dbReference>
<dbReference type="SUPFAM" id="SSF102114">
    <property type="entry name" value="Radical SAM enzymes"/>
    <property type="match status" value="1"/>
</dbReference>
<dbReference type="PROSITE" id="PS51449">
    <property type="entry name" value="MTTASE_N"/>
    <property type="match status" value="1"/>
</dbReference>
<dbReference type="PROSITE" id="PS01278">
    <property type="entry name" value="MTTASE_RADICAL"/>
    <property type="match status" value="1"/>
</dbReference>
<dbReference type="PROSITE" id="PS51918">
    <property type="entry name" value="RADICAL_SAM"/>
    <property type="match status" value="1"/>
</dbReference>
<dbReference type="PROSITE" id="PS50926">
    <property type="entry name" value="TRAM"/>
    <property type="match status" value="1"/>
</dbReference>
<feature type="chain" id="PRO_0000374614" description="tRNA-2-methylthio-N(6)-dimethylallyladenosine synthase">
    <location>
        <begin position="1"/>
        <end position="436"/>
    </location>
</feature>
<feature type="domain" description="MTTase N-terminal" evidence="1">
    <location>
        <begin position="1"/>
        <end position="115"/>
    </location>
</feature>
<feature type="domain" description="Radical SAM core" evidence="2">
    <location>
        <begin position="137"/>
        <end position="368"/>
    </location>
</feature>
<feature type="domain" description="TRAM" evidence="1">
    <location>
        <begin position="371"/>
        <end position="432"/>
    </location>
</feature>
<feature type="binding site" evidence="1">
    <location>
        <position position="10"/>
    </location>
    <ligand>
        <name>[4Fe-4S] cluster</name>
        <dbReference type="ChEBI" id="CHEBI:49883"/>
        <label>1</label>
    </ligand>
</feature>
<feature type="binding site" evidence="1">
    <location>
        <position position="46"/>
    </location>
    <ligand>
        <name>[4Fe-4S] cluster</name>
        <dbReference type="ChEBI" id="CHEBI:49883"/>
        <label>1</label>
    </ligand>
</feature>
<feature type="binding site" evidence="1">
    <location>
        <position position="80"/>
    </location>
    <ligand>
        <name>[4Fe-4S] cluster</name>
        <dbReference type="ChEBI" id="CHEBI:49883"/>
        <label>1</label>
    </ligand>
</feature>
<feature type="binding site" evidence="1">
    <location>
        <position position="151"/>
    </location>
    <ligand>
        <name>[4Fe-4S] cluster</name>
        <dbReference type="ChEBI" id="CHEBI:49883"/>
        <label>2</label>
        <note>4Fe-4S-S-AdoMet</note>
    </ligand>
</feature>
<feature type="binding site" evidence="1">
    <location>
        <position position="155"/>
    </location>
    <ligand>
        <name>[4Fe-4S] cluster</name>
        <dbReference type="ChEBI" id="CHEBI:49883"/>
        <label>2</label>
        <note>4Fe-4S-S-AdoMet</note>
    </ligand>
</feature>
<feature type="binding site" evidence="1">
    <location>
        <position position="158"/>
    </location>
    <ligand>
        <name>[4Fe-4S] cluster</name>
        <dbReference type="ChEBI" id="CHEBI:49883"/>
        <label>2</label>
        <note>4Fe-4S-S-AdoMet</note>
    </ligand>
</feature>
<accession>A8F716</accession>
<evidence type="ECO:0000255" key="1">
    <source>
        <dbReference type="HAMAP-Rule" id="MF_01864"/>
    </source>
</evidence>
<evidence type="ECO:0000255" key="2">
    <source>
        <dbReference type="PROSITE-ProRule" id="PRU01266"/>
    </source>
</evidence>
<organism>
    <name type="scientific">Pseudothermotoga lettingae (strain ATCC BAA-301 / DSM 14385 / NBRC 107922 / TMO)</name>
    <name type="common">Thermotoga lettingae</name>
    <dbReference type="NCBI Taxonomy" id="416591"/>
    <lineage>
        <taxon>Bacteria</taxon>
        <taxon>Thermotogati</taxon>
        <taxon>Thermotogota</taxon>
        <taxon>Thermotogae</taxon>
        <taxon>Thermotogales</taxon>
        <taxon>Thermotogaceae</taxon>
        <taxon>Pseudothermotoga</taxon>
    </lineage>
</organism>